<sequence>MSEMTPREIVHELDRHIIGQADAKRAVAVALRNRWRRMQLGEEMRHEVTPKNILMIGPTGVGKTEIARRLAKLANAPFIKVEATKFTEVGYVGKEVDSIIRDLTDVAIKLVRETEMEKMKYRAEEAAEERILDALLPNPRNTWGEEEKADNSNTRQIFRKKLREGQLDDKEIELELSASPMGVEIMTPPGMEEMANQLQGLFQNLGQNQKKKRKIKVKEAMKALIEEEAARLVNPEELKQKAIAAVENNGIVFLDEIDKICKRGESSGPDVSREGVQRDLLPLVEGCTVNTKHGMVKTDHILFVASGAFQVARPSDLIPELQGRLPIRVELTALTTDDFERILTEPNASLTDQYKALMATEGVNIEFTKDGIRRLAEAAWQVNERTENIGARRLHTVMERLMEDISFDASEKSGETFVIDTDYVNAHLGKLIEDEDLSRFIL</sequence>
<dbReference type="EMBL" id="CP000644">
    <property type="protein sequence ID" value="ABO88393.1"/>
    <property type="molecule type" value="Genomic_DNA"/>
</dbReference>
<dbReference type="RefSeq" id="WP_005318386.1">
    <property type="nucleotide sequence ID" value="NC_009348.1"/>
</dbReference>
<dbReference type="SMR" id="A4SHM1"/>
<dbReference type="STRING" id="29491.GCA_000820065_01272"/>
<dbReference type="GeneID" id="79881799"/>
<dbReference type="KEGG" id="asa:ASA_0199"/>
<dbReference type="eggNOG" id="COG1220">
    <property type="taxonomic scope" value="Bacteria"/>
</dbReference>
<dbReference type="HOGENOM" id="CLU_033123_0_0_6"/>
<dbReference type="Proteomes" id="UP000000225">
    <property type="component" value="Chromosome"/>
</dbReference>
<dbReference type="GO" id="GO:0009376">
    <property type="term" value="C:HslUV protease complex"/>
    <property type="evidence" value="ECO:0007669"/>
    <property type="project" value="UniProtKB-UniRule"/>
</dbReference>
<dbReference type="GO" id="GO:0005524">
    <property type="term" value="F:ATP binding"/>
    <property type="evidence" value="ECO:0007669"/>
    <property type="project" value="UniProtKB-UniRule"/>
</dbReference>
<dbReference type="GO" id="GO:0016887">
    <property type="term" value="F:ATP hydrolysis activity"/>
    <property type="evidence" value="ECO:0007669"/>
    <property type="project" value="InterPro"/>
</dbReference>
<dbReference type="GO" id="GO:0008233">
    <property type="term" value="F:peptidase activity"/>
    <property type="evidence" value="ECO:0007669"/>
    <property type="project" value="InterPro"/>
</dbReference>
<dbReference type="GO" id="GO:0036402">
    <property type="term" value="F:proteasome-activating activity"/>
    <property type="evidence" value="ECO:0007669"/>
    <property type="project" value="UniProtKB-UniRule"/>
</dbReference>
<dbReference type="GO" id="GO:0043335">
    <property type="term" value="P:protein unfolding"/>
    <property type="evidence" value="ECO:0007669"/>
    <property type="project" value="UniProtKB-UniRule"/>
</dbReference>
<dbReference type="GO" id="GO:0051603">
    <property type="term" value="P:proteolysis involved in protein catabolic process"/>
    <property type="evidence" value="ECO:0007669"/>
    <property type="project" value="TreeGrafter"/>
</dbReference>
<dbReference type="CDD" id="cd19498">
    <property type="entry name" value="RecA-like_HslU"/>
    <property type="match status" value="1"/>
</dbReference>
<dbReference type="FunFam" id="1.10.8.10:FF:000028">
    <property type="entry name" value="ATP-dependent protease ATPase subunit HslU"/>
    <property type="match status" value="1"/>
</dbReference>
<dbReference type="FunFam" id="1.10.8.60:FF:000027">
    <property type="entry name" value="ATP-dependent protease ATPase subunit HslU"/>
    <property type="match status" value="1"/>
</dbReference>
<dbReference type="FunFam" id="3.40.50.300:FF:000213">
    <property type="entry name" value="ATP-dependent protease ATPase subunit HslU"/>
    <property type="match status" value="1"/>
</dbReference>
<dbReference type="FunFam" id="3.40.50.300:FF:000220">
    <property type="entry name" value="ATP-dependent protease ATPase subunit HslU"/>
    <property type="match status" value="1"/>
</dbReference>
<dbReference type="Gene3D" id="1.10.8.60">
    <property type="match status" value="1"/>
</dbReference>
<dbReference type="Gene3D" id="1.10.8.10">
    <property type="entry name" value="DNA helicase RuvA subunit, C-terminal domain"/>
    <property type="match status" value="1"/>
</dbReference>
<dbReference type="Gene3D" id="3.40.50.300">
    <property type="entry name" value="P-loop containing nucleotide triphosphate hydrolases"/>
    <property type="match status" value="2"/>
</dbReference>
<dbReference type="HAMAP" id="MF_00249">
    <property type="entry name" value="HslU"/>
    <property type="match status" value="1"/>
</dbReference>
<dbReference type="InterPro" id="IPR003593">
    <property type="entry name" value="AAA+_ATPase"/>
</dbReference>
<dbReference type="InterPro" id="IPR050052">
    <property type="entry name" value="ATP-dep_Clp_protease_ClpX"/>
</dbReference>
<dbReference type="InterPro" id="IPR003959">
    <property type="entry name" value="ATPase_AAA_core"/>
</dbReference>
<dbReference type="InterPro" id="IPR019489">
    <property type="entry name" value="Clp_ATPase_C"/>
</dbReference>
<dbReference type="InterPro" id="IPR004491">
    <property type="entry name" value="HslU"/>
</dbReference>
<dbReference type="InterPro" id="IPR027417">
    <property type="entry name" value="P-loop_NTPase"/>
</dbReference>
<dbReference type="NCBIfam" id="TIGR00390">
    <property type="entry name" value="hslU"/>
    <property type="match status" value="1"/>
</dbReference>
<dbReference type="NCBIfam" id="NF003544">
    <property type="entry name" value="PRK05201.1"/>
    <property type="match status" value="1"/>
</dbReference>
<dbReference type="PANTHER" id="PTHR48102">
    <property type="entry name" value="ATP-DEPENDENT CLP PROTEASE ATP-BINDING SUBUNIT CLPX-LIKE, MITOCHONDRIAL-RELATED"/>
    <property type="match status" value="1"/>
</dbReference>
<dbReference type="PANTHER" id="PTHR48102:SF3">
    <property type="entry name" value="ATP-DEPENDENT PROTEASE ATPASE SUBUNIT HSLU"/>
    <property type="match status" value="1"/>
</dbReference>
<dbReference type="Pfam" id="PF00004">
    <property type="entry name" value="AAA"/>
    <property type="match status" value="1"/>
</dbReference>
<dbReference type="Pfam" id="PF07724">
    <property type="entry name" value="AAA_2"/>
    <property type="match status" value="1"/>
</dbReference>
<dbReference type="SMART" id="SM00382">
    <property type="entry name" value="AAA"/>
    <property type="match status" value="1"/>
</dbReference>
<dbReference type="SMART" id="SM01086">
    <property type="entry name" value="ClpB_D2-small"/>
    <property type="match status" value="1"/>
</dbReference>
<dbReference type="SUPFAM" id="SSF52540">
    <property type="entry name" value="P-loop containing nucleoside triphosphate hydrolases"/>
    <property type="match status" value="1"/>
</dbReference>
<protein>
    <recommendedName>
        <fullName evidence="1">ATP-dependent protease ATPase subunit HslU</fullName>
    </recommendedName>
    <alternativeName>
        <fullName evidence="1">Unfoldase HslU</fullName>
    </alternativeName>
</protein>
<keyword id="KW-0067">ATP-binding</keyword>
<keyword id="KW-0143">Chaperone</keyword>
<keyword id="KW-0963">Cytoplasm</keyword>
<keyword id="KW-0547">Nucleotide-binding</keyword>
<feature type="chain" id="PRO_1000012697" description="ATP-dependent protease ATPase subunit HslU">
    <location>
        <begin position="1"/>
        <end position="442"/>
    </location>
</feature>
<feature type="binding site" evidence="1">
    <location>
        <position position="18"/>
    </location>
    <ligand>
        <name>ATP</name>
        <dbReference type="ChEBI" id="CHEBI:30616"/>
    </ligand>
</feature>
<feature type="binding site" evidence="1">
    <location>
        <begin position="60"/>
        <end position="65"/>
    </location>
    <ligand>
        <name>ATP</name>
        <dbReference type="ChEBI" id="CHEBI:30616"/>
    </ligand>
</feature>
<feature type="binding site" evidence="1">
    <location>
        <position position="255"/>
    </location>
    <ligand>
        <name>ATP</name>
        <dbReference type="ChEBI" id="CHEBI:30616"/>
    </ligand>
</feature>
<feature type="binding site" evidence="1">
    <location>
        <position position="320"/>
    </location>
    <ligand>
        <name>ATP</name>
        <dbReference type="ChEBI" id="CHEBI:30616"/>
    </ligand>
</feature>
<feature type="binding site" evidence="1">
    <location>
        <position position="392"/>
    </location>
    <ligand>
        <name>ATP</name>
        <dbReference type="ChEBI" id="CHEBI:30616"/>
    </ligand>
</feature>
<comment type="function">
    <text evidence="1">ATPase subunit of a proteasome-like degradation complex; this subunit has chaperone activity. The binding of ATP and its subsequent hydrolysis by HslU are essential for unfolding of protein substrates subsequently hydrolyzed by HslV. HslU recognizes the N-terminal part of its protein substrates and unfolds these before they are guided to HslV for hydrolysis.</text>
</comment>
<comment type="subunit">
    <text evidence="1">A double ring-shaped homohexamer of HslV is capped on each side by a ring-shaped HslU homohexamer. The assembly of the HslU/HslV complex is dependent on binding of ATP.</text>
</comment>
<comment type="subcellular location">
    <subcellularLocation>
        <location evidence="1">Cytoplasm</location>
    </subcellularLocation>
</comment>
<comment type="similarity">
    <text evidence="1">Belongs to the ClpX chaperone family. HslU subfamily.</text>
</comment>
<evidence type="ECO:0000255" key="1">
    <source>
        <dbReference type="HAMAP-Rule" id="MF_00249"/>
    </source>
</evidence>
<organism>
    <name type="scientific">Aeromonas salmonicida (strain A449)</name>
    <dbReference type="NCBI Taxonomy" id="382245"/>
    <lineage>
        <taxon>Bacteria</taxon>
        <taxon>Pseudomonadati</taxon>
        <taxon>Pseudomonadota</taxon>
        <taxon>Gammaproteobacteria</taxon>
        <taxon>Aeromonadales</taxon>
        <taxon>Aeromonadaceae</taxon>
        <taxon>Aeromonas</taxon>
    </lineage>
</organism>
<proteinExistence type="inferred from homology"/>
<gene>
    <name evidence="1" type="primary">hslU</name>
    <name type="ordered locus">ASA_0199</name>
</gene>
<name>HSLU_AERS4</name>
<accession>A4SHM1</accession>
<reference key="1">
    <citation type="journal article" date="2008" name="BMC Genomics">
        <title>The genome of Aeromonas salmonicida subsp. salmonicida A449: insights into the evolution of a fish pathogen.</title>
        <authorList>
            <person name="Reith M.E."/>
            <person name="Singh R.K."/>
            <person name="Curtis B."/>
            <person name="Boyd J.M."/>
            <person name="Bouevitch A."/>
            <person name="Kimball J."/>
            <person name="Munholland J."/>
            <person name="Murphy C."/>
            <person name="Sarty D."/>
            <person name="Williams J."/>
            <person name="Nash J.H."/>
            <person name="Johnson S.C."/>
            <person name="Brown L.L."/>
        </authorList>
    </citation>
    <scope>NUCLEOTIDE SEQUENCE [LARGE SCALE GENOMIC DNA]</scope>
    <source>
        <strain>A449</strain>
    </source>
</reference>